<reference evidence="10" key="1">
    <citation type="submission" date="2017-08" db="EMBL/GenBank/DDBJ databases">
        <title>USMARCv1.0.</title>
        <authorList>
            <person name="Hannum G.I."/>
            <person name="Koren S."/>
            <person name="Schroeder S.G."/>
            <person name="Chin S.C."/>
            <person name="Nonneman D.J."/>
            <person name="Becker S.A."/>
            <person name="Rosen B.D."/>
            <person name="Bickhart D.M."/>
            <person name="Putnam N.H."/>
            <person name="Green R.E."/>
            <person name="Tuggle C.K."/>
            <person name="Liu H."/>
            <person name="Rohrer G.A."/>
            <person name="Warr A."/>
            <person name="Hall R."/>
            <person name="Kim K."/>
            <person name="Hume D.A."/>
            <person name="Talbot R."/>
            <person name="Chow W."/>
            <person name="Howe K."/>
            <person name="Schwartz A.S."/>
            <person name="Watson M."/>
            <person name="Archibald A.L."/>
            <person name="Phillippy A.M."/>
            <person name="Smith T.P.L."/>
        </authorList>
    </citation>
    <scope>NUCLEOTIDE SEQUENCE [LARGE SCALE GENOMIC DNA]</scope>
</reference>
<reference key="2">
    <citation type="journal article" date="1988" name="Agric. Biol. Chem.">
        <title>Pig liver translational initiation factor eIF-2: N-terminal amino acid sequences of alpha and gamma subunits and the phosphorylation site structure.</title>
        <authorList>
            <person name="Suzuki H."/>
            <person name="Mukouyama E.B."/>
        </authorList>
    </citation>
    <scope>PROTEIN SEQUENCE OF 2-70</scope>
    <scope>PHOSPHORYLATION AT SER-52</scope>
    <source>
        <tissue>Liver</tissue>
    </source>
</reference>
<feature type="chain" id="PRO_0000137384" description="Eukaryotic translation initiation factor 2 subunit 1">
    <location>
        <begin position="1"/>
        <end position="315"/>
    </location>
</feature>
<feature type="domain" description="S1 motif" evidence="6">
    <location>
        <begin position="17"/>
        <end position="88"/>
    </location>
</feature>
<feature type="region of interest" description="Disordered" evidence="7">
    <location>
        <begin position="292"/>
        <end position="315"/>
    </location>
</feature>
<feature type="compositionally biased region" description="Acidic residues" evidence="7">
    <location>
        <begin position="299"/>
        <end position="308"/>
    </location>
</feature>
<feature type="modified residue" description="Phosphoserine; by HRI" evidence="4">
    <location>
        <position position="49"/>
    </location>
</feature>
<feature type="modified residue" description="Phosphoserine" evidence="8">
    <location>
        <position position="52"/>
    </location>
</feature>
<feature type="modified residue" description="N6-acetyllysine" evidence="1">
    <location>
        <position position="141"/>
    </location>
</feature>
<feature type="modified residue" description="Phosphoserine" evidence="1">
    <location>
        <position position="158"/>
    </location>
</feature>
<feature type="modified residue" description="Phosphothreonine" evidence="1">
    <location>
        <position position="279"/>
    </location>
</feature>
<feature type="modified residue" description="Phosphothreonine" evidence="1">
    <location>
        <position position="281"/>
    </location>
</feature>
<keyword id="KW-0007">Acetylation</keyword>
<keyword id="KW-0963">Cytoplasm</keyword>
<keyword id="KW-0903">Direct protein sequencing</keyword>
<keyword id="KW-0396">Initiation factor</keyword>
<keyword id="KW-0496">Mitochondrion</keyword>
<keyword id="KW-0597">Phosphoprotein</keyword>
<keyword id="KW-0648">Protein biosynthesis</keyword>
<keyword id="KW-1185">Reference proteome</keyword>
<keyword id="KW-0694">RNA-binding</keyword>
<keyword id="KW-0810">Translation regulation</keyword>
<accession>P20460</accession>
<accession>A0A4X1U6Q4</accession>
<dbReference type="PIR" id="PT0051">
    <property type="entry name" value="PT0051"/>
</dbReference>
<dbReference type="RefSeq" id="XP_001928374.1">
    <property type="nucleotide sequence ID" value="XM_001928339.4"/>
</dbReference>
<dbReference type="RefSeq" id="XP_005656394.1">
    <property type="nucleotide sequence ID" value="XM_005656337.2"/>
</dbReference>
<dbReference type="SMR" id="P20460"/>
<dbReference type="STRING" id="9823.ENSSSCP00000037333"/>
<dbReference type="PaxDb" id="9823-ENSSSCP00000023652"/>
<dbReference type="PeptideAtlas" id="P20460"/>
<dbReference type="Ensembl" id="ENSSSCT00000037336.3">
    <property type="protein sequence ID" value="ENSSSCP00000037333.1"/>
    <property type="gene ID" value="ENSSSCG00000033295.3"/>
</dbReference>
<dbReference type="Ensembl" id="ENSSSCT00005067777">
    <property type="protein sequence ID" value="ENSSSCP00005042120"/>
    <property type="gene ID" value="ENSSSCG00005042238"/>
</dbReference>
<dbReference type="Ensembl" id="ENSSSCT00015073448.1">
    <property type="protein sequence ID" value="ENSSSCP00015029507.1"/>
    <property type="gene ID" value="ENSSSCG00015055096.1"/>
</dbReference>
<dbReference type="Ensembl" id="ENSSSCT00025011312.1">
    <property type="protein sequence ID" value="ENSSSCP00025004550.1"/>
    <property type="gene ID" value="ENSSSCG00025008493.1"/>
</dbReference>
<dbReference type="Ensembl" id="ENSSSCT00030036233.1">
    <property type="protein sequence ID" value="ENSSSCP00030016553.1"/>
    <property type="gene ID" value="ENSSSCG00030025935.1"/>
</dbReference>
<dbReference type="Ensembl" id="ENSSSCT00040093184.1">
    <property type="protein sequence ID" value="ENSSSCP00040041173.1"/>
    <property type="gene ID" value="ENSSSCG00040068071.1"/>
</dbReference>
<dbReference type="Ensembl" id="ENSSSCT00045057519.1">
    <property type="protein sequence ID" value="ENSSSCP00045040229.1"/>
    <property type="gene ID" value="ENSSSCG00045033641.1"/>
</dbReference>
<dbReference type="Ensembl" id="ENSSSCT00045057573.1">
    <property type="protein sequence ID" value="ENSSSCP00045040271.1"/>
    <property type="gene ID" value="ENSSSCG00045033641.1"/>
</dbReference>
<dbReference type="Ensembl" id="ENSSSCT00050099774.1">
    <property type="protein sequence ID" value="ENSSSCP00050043196.1"/>
    <property type="gene ID" value="ENSSSCG00050073044.1"/>
</dbReference>
<dbReference type="Ensembl" id="ENSSSCT00055025939.1">
    <property type="protein sequence ID" value="ENSSSCP00055020613.1"/>
    <property type="gene ID" value="ENSSSCG00055013179.1"/>
</dbReference>
<dbReference type="Ensembl" id="ENSSSCT00060088331.1">
    <property type="protein sequence ID" value="ENSSSCP00060038227.1"/>
    <property type="gene ID" value="ENSSSCG00060064715.1"/>
</dbReference>
<dbReference type="Ensembl" id="ENSSSCT00065033280.1">
    <property type="protein sequence ID" value="ENSSSCP00065013753.1"/>
    <property type="gene ID" value="ENSSSCG00065024894.1"/>
</dbReference>
<dbReference type="Ensembl" id="ENSSSCT00070029441.1">
    <property type="protein sequence ID" value="ENSSSCP00070024538.1"/>
    <property type="gene ID" value="ENSSSCG00070014996.1"/>
</dbReference>
<dbReference type="Ensembl" id="ENSSSCT00070029448.1">
    <property type="protein sequence ID" value="ENSSSCP00070024545.1"/>
    <property type="gene ID" value="ENSSSCG00070014996.1"/>
</dbReference>
<dbReference type="Ensembl" id="ENSSSCT00085036109">
    <property type="protein sequence ID" value="ENSSSCP00085024810"/>
    <property type="gene ID" value="ENSSSCG00085019041"/>
</dbReference>
<dbReference type="Ensembl" id="ENSSSCT00090028414">
    <property type="protein sequence ID" value="ENSSSCP00090017484"/>
    <property type="gene ID" value="ENSSSCG00090016163"/>
</dbReference>
<dbReference type="Ensembl" id="ENSSSCT00105012855">
    <property type="protein sequence ID" value="ENSSSCP00105009514"/>
    <property type="gene ID" value="ENSSSCG00105006328"/>
</dbReference>
<dbReference type="Ensembl" id="ENSSSCT00110016600">
    <property type="protein sequence ID" value="ENSSSCP00110011480"/>
    <property type="gene ID" value="ENSSSCG00110008611"/>
</dbReference>
<dbReference type="Ensembl" id="ENSSSCT00115014390">
    <property type="protein sequence ID" value="ENSSSCP00115013591"/>
    <property type="gene ID" value="ENSSSCG00115008237"/>
</dbReference>
<dbReference type="Ensembl" id="ENSSSCT00130063457">
    <property type="protein sequence ID" value="ENSSSCP00130045435"/>
    <property type="gene ID" value="ENSSSCG00130032529"/>
</dbReference>
<dbReference type="GeneID" id="100155472"/>
<dbReference type="KEGG" id="ssc:100155472"/>
<dbReference type="CTD" id="1965"/>
<dbReference type="VGNC" id="VGNC:87614">
    <property type="gene designation" value="EIF2S1"/>
</dbReference>
<dbReference type="eggNOG" id="KOG2916">
    <property type="taxonomic scope" value="Eukaryota"/>
</dbReference>
<dbReference type="GeneTree" id="ENSGT00390000007015"/>
<dbReference type="InParanoid" id="P20460"/>
<dbReference type="OMA" id="DVNEHQR"/>
<dbReference type="OrthoDB" id="1685042at2759"/>
<dbReference type="Proteomes" id="UP000008227">
    <property type="component" value="Chromosome 7"/>
</dbReference>
<dbReference type="Proteomes" id="UP000314985">
    <property type="component" value="Chromosome 7"/>
</dbReference>
<dbReference type="Proteomes" id="UP000694570">
    <property type="component" value="Unplaced"/>
</dbReference>
<dbReference type="Proteomes" id="UP000694571">
    <property type="component" value="Unplaced"/>
</dbReference>
<dbReference type="Proteomes" id="UP000694720">
    <property type="component" value="Unplaced"/>
</dbReference>
<dbReference type="Proteomes" id="UP000694722">
    <property type="component" value="Unplaced"/>
</dbReference>
<dbReference type="Proteomes" id="UP000694723">
    <property type="component" value="Unplaced"/>
</dbReference>
<dbReference type="Proteomes" id="UP000694724">
    <property type="component" value="Unplaced"/>
</dbReference>
<dbReference type="Proteomes" id="UP000694725">
    <property type="component" value="Unplaced"/>
</dbReference>
<dbReference type="Proteomes" id="UP000694726">
    <property type="component" value="Unplaced"/>
</dbReference>
<dbReference type="Proteomes" id="UP000694727">
    <property type="component" value="Unplaced"/>
</dbReference>
<dbReference type="Proteomes" id="UP000694728">
    <property type="component" value="Unplaced"/>
</dbReference>
<dbReference type="GO" id="GO:0010494">
    <property type="term" value="C:cytoplasmic stress granule"/>
    <property type="evidence" value="ECO:0000250"/>
    <property type="project" value="UniProtKB"/>
</dbReference>
<dbReference type="GO" id="GO:0005829">
    <property type="term" value="C:cytosol"/>
    <property type="evidence" value="ECO:0007669"/>
    <property type="project" value="UniProtKB-SubCell"/>
</dbReference>
<dbReference type="GO" id="GO:0005850">
    <property type="term" value="C:eukaryotic translation initiation factor 2 complex"/>
    <property type="evidence" value="ECO:0000250"/>
    <property type="project" value="UniProtKB"/>
</dbReference>
<dbReference type="GO" id="GO:0005739">
    <property type="term" value="C:mitochondrion"/>
    <property type="evidence" value="ECO:0000250"/>
    <property type="project" value="UniProtKB"/>
</dbReference>
<dbReference type="GO" id="GO:0005634">
    <property type="term" value="C:nucleus"/>
    <property type="evidence" value="ECO:0007669"/>
    <property type="project" value="Ensembl"/>
</dbReference>
<dbReference type="GO" id="GO:0045202">
    <property type="term" value="C:synapse"/>
    <property type="evidence" value="ECO:0007669"/>
    <property type="project" value="Ensembl"/>
</dbReference>
<dbReference type="GO" id="GO:0043022">
    <property type="term" value="F:ribosome binding"/>
    <property type="evidence" value="ECO:0007669"/>
    <property type="project" value="Ensembl"/>
</dbReference>
<dbReference type="GO" id="GO:0003723">
    <property type="term" value="F:RNA binding"/>
    <property type="evidence" value="ECO:0007669"/>
    <property type="project" value="UniProtKB-KW"/>
</dbReference>
<dbReference type="GO" id="GO:0003743">
    <property type="term" value="F:translation initiation factor activity"/>
    <property type="evidence" value="ECO:0007669"/>
    <property type="project" value="UniProtKB-KW"/>
</dbReference>
<dbReference type="GO" id="GO:0034198">
    <property type="term" value="P:cellular response to amino acid starvation"/>
    <property type="evidence" value="ECO:0000250"/>
    <property type="project" value="UniProtKB"/>
</dbReference>
<dbReference type="GO" id="GO:0034599">
    <property type="term" value="P:cellular response to oxidative stress"/>
    <property type="evidence" value="ECO:0007669"/>
    <property type="project" value="Ensembl"/>
</dbReference>
<dbReference type="GO" id="GO:0034644">
    <property type="term" value="P:cellular response to UV"/>
    <property type="evidence" value="ECO:0000250"/>
    <property type="project" value="UniProtKB"/>
</dbReference>
<dbReference type="GO" id="GO:0140468">
    <property type="term" value="P:HRI-mediated signaling"/>
    <property type="evidence" value="ECO:0000250"/>
    <property type="project" value="UniProtKB"/>
</dbReference>
<dbReference type="GO" id="GO:0000423">
    <property type="term" value="P:mitophagy"/>
    <property type="evidence" value="ECO:0000250"/>
    <property type="project" value="UniProtKB"/>
</dbReference>
<dbReference type="GO" id="GO:0032057">
    <property type="term" value="P:negative regulation of translational initiation in response to stress"/>
    <property type="evidence" value="ECO:0000250"/>
    <property type="project" value="UniProtKB"/>
</dbReference>
<dbReference type="GO" id="GO:0036499">
    <property type="term" value="P:PERK-mediated unfolded protein response"/>
    <property type="evidence" value="ECO:0000250"/>
    <property type="project" value="UniProtKB"/>
</dbReference>
<dbReference type="GO" id="GO:0036490">
    <property type="term" value="P:regulation of translation in response to endoplasmic reticulum stress"/>
    <property type="evidence" value="ECO:0007669"/>
    <property type="project" value="Ensembl"/>
</dbReference>
<dbReference type="GO" id="GO:0043558">
    <property type="term" value="P:regulation of translational initiation in response to stress"/>
    <property type="evidence" value="ECO:0007669"/>
    <property type="project" value="Ensembl"/>
</dbReference>
<dbReference type="GO" id="GO:0034976">
    <property type="term" value="P:response to endoplasmic reticulum stress"/>
    <property type="evidence" value="ECO:0000250"/>
    <property type="project" value="UniProtKB"/>
</dbReference>
<dbReference type="GO" id="GO:0034063">
    <property type="term" value="P:stress granule assembly"/>
    <property type="evidence" value="ECO:0007669"/>
    <property type="project" value="Ensembl"/>
</dbReference>
<dbReference type="CDD" id="cd04452">
    <property type="entry name" value="S1_IF2_alpha"/>
    <property type="match status" value="1"/>
</dbReference>
<dbReference type="FunFam" id="1.10.150.190:FF:000001">
    <property type="entry name" value="Eukaryotic translation initiation factor 2 subunit 1"/>
    <property type="match status" value="1"/>
</dbReference>
<dbReference type="FunFam" id="2.40.50.140:FF:000795">
    <property type="entry name" value="Eukaryotic translation initiation factor 2 subunit 1"/>
    <property type="match status" value="1"/>
</dbReference>
<dbReference type="FunFam" id="3.30.70.1130:FF:000001">
    <property type="entry name" value="Eukaryotic translation initiation factor 2 subunit 1"/>
    <property type="match status" value="1"/>
</dbReference>
<dbReference type="Gene3D" id="3.30.70.1130">
    <property type="entry name" value="EIF_2_alpha"/>
    <property type="match status" value="1"/>
</dbReference>
<dbReference type="Gene3D" id="2.40.50.140">
    <property type="entry name" value="Nucleic acid-binding proteins"/>
    <property type="match status" value="1"/>
</dbReference>
<dbReference type="Gene3D" id="1.10.150.190">
    <property type="entry name" value="Translation initiation factor 2, subunit 1, domain 2"/>
    <property type="match status" value="1"/>
</dbReference>
<dbReference type="InterPro" id="IPR012340">
    <property type="entry name" value="NA-bd_OB-fold"/>
</dbReference>
<dbReference type="InterPro" id="IPR003029">
    <property type="entry name" value="S1_domain"/>
</dbReference>
<dbReference type="InterPro" id="IPR044126">
    <property type="entry name" value="S1_IF2_alpha"/>
</dbReference>
<dbReference type="InterPro" id="IPR024055">
    <property type="entry name" value="TIF2_asu_C"/>
</dbReference>
<dbReference type="InterPro" id="IPR024054">
    <property type="entry name" value="TIF2_asu_middle_sf"/>
</dbReference>
<dbReference type="InterPro" id="IPR011488">
    <property type="entry name" value="TIF_2_asu"/>
</dbReference>
<dbReference type="PANTHER" id="PTHR10602">
    <property type="entry name" value="EUKARYOTIC TRANSLATION INITIATION FACTOR 2 SUBUNIT 1"/>
    <property type="match status" value="1"/>
</dbReference>
<dbReference type="PANTHER" id="PTHR10602:SF0">
    <property type="entry name" value="EUKARYOTIC TRANSLATION INITIATION FACTOR 2 SUBUNIT 1"/>
    <property type="match status" value="1"/>
</dbReference>
<dbReference type="Pfam" id="PF07541">
    <property type="entry name" value="EIF_2_alpha"/>
    <property type="match status" value="1"/>
</dbReference>
<dbReference type="Pfam" id="PF00575">
    <property type="entry name" value="S1"/>
    <property type="match status" value="1"/>
</dbReference>
<dbReference type="SMART" id="SM00316">
    <property type="entry name" value="S1"/>
    <property type="match status" value="1"/>
</dbReference>
<dbReference type="SUPFAM" id="SSF110993">
    <property type="entry name" value="eIF-2-alpha, C-terminal domain"/>
    <property type="match status" value="1"/>
</dbReference>
<dbReference type="SUPFAM" id="SSF116742">
    <property type="entry name" value="eIF2alpha middle domain-like"/>
    <property type="match status" value="1"/>
</dbReference>
<dbReference type="SUPFAM" id="SSF50249">
    <property type="entry name" value="Nucleic acid-binding proteins"/>
    <property type="match status" value="1"/>
</dbReference>
<dbReference type="PROSITE" id="PS50126">
    <property type="entry name" value="S1"/>
    <property type="match status" value="1"/>
</dbReference>
<comment type="function">
    <text evidence="1">Member of the eIF2 complex that functions in the early steps of protein synthesis by forming a ternary complex with GTP and initiator tRNA. This complex binds to a 40S ribosomal subunit, followed by mRNA binding to form a 43S pre-initiation complex. Junction of the 60S ribosomal subunit to form the 80S initiation complex is preceded by hydrolysis of the GTP bound to eIF2 and release of an eIF2-GDP binary complex. In order for eIF2 to recycle and catalyze another round of initiation, the GDP bound to eIF2 must exchange with GTP by way of a reaction catalyzed by eIF2B. EIF2S1/eIF2-alpha is a key component of the integrated stress response (ISR), required for adaptation to various stress: phosphorylation by metabolic-stress sensing protein kinases (EIF2AK1/HRI, EIF2AK2/PKR, EIF2AK3/PERK and EIF2AK4/GCN2) in response to stress converts EIF2S1/eIF2-alpha in a global protein synthesis inhibitor, leading to a attenuation of cap-dependent translation, while concomitantly initiating the preferential translation of ISR-specific mRNAs, such as the transcriptional activators ATF4 and QRICH1, and hence allowing ATF4- and QRICH1-mediated reprogramming. EIF2S1/eIF2-alpha also acts as an activator of mitophagy in response to mitochondrial damage: phosphorylation by EIF2AK1/HRI promotes relocalization to the mitochondrial surface, thereby triggering PRKN-independent mitophagy (By similarity).</text>
</comment>
<comment type="activity regulation">
    <text evidence="1">Activity is regulated by phosphorylation at Ser-49 and Ser-52, which stabilizes the eIF2/GDP/eIF2B complex and prevents the eIF2B-mediated exchange of GDP for GTP, thereby preventing the formation of the 43S pre-initiation complex (43S PIC). This results in the global attenuation of 5' cap-dependent protein synthesis and concomitant translation of ISR-specific mRNAs that contain a short upstream open reading frame (uORF) in their 5' UTR, such as ATF4, ATF5, DDIT3/CHOP and PPP1R15A/GADD34.</text>
</comment>
<comment type="subunit">
    <text evidence="1 3 5">Eukaryotic translation initiation factor 2 eIF2 is a heterotrimeric complex composed of an alpha (EIF2S1), a beta (EIF2S2) and a gamma (EIF2S3) chain (By similarity). eIF2 is member of the 43S pre-initiation complex (43S PIC). eIF2 forms a complex with at least CELF1/CUGBP1, CALR, CALR3, EIF2S1, EIF2S2, HSP90B1 and HSPA5 (By similarity). Interaction with METAP2 protects EIF2S1 from inhibitory phosphorylation (By similarity). Interacts with ABCF1 (By similarity). Associates with ribosomes (By similarity). Interacts with DDX3X in an RNA-independent manner (By similarity).</text>
</comment>
<comment type="subcellular location">
    <subcellularLocation>
        <location evidence="5">Cytoplasm</location>
        <location evidence="5">Stress granule</location>
    </subcellularLocation>
    <subcellularLocation>
        <location evidence="2">Cytoplasm</location>
        <location evidence="2">Cytosol</location>
    </subcellularLocation>
    <subcellularLocation>
        <location evidence="1">Mitochondrion</location>
    </subcellularLocation>
    <text evidence="1 5">Colocalizes with NANOS3 in the stress granules (By similarity). Relocalizes to the surface of mitochondria in response to mitochondrial damage and phosphorylation by EIF2AK1/HRI (By similarity).</text>
</comment>
<comment type="PTM">
    <text evidence="1 5">Phosphorylation at Ser-49 and Ser-52 stabilizes the eIF-2/GDP/eIF2B complex and prevents GDP/GTP exchange reaction, thus impairing the recycling of eIF-2 between successive rounds of initiation and leading to global inhibition of translation, while concomitantly initiating the preferential translation of integrated stress response (ISR)-specific mRNAs (Ref.2). Substrate for at least 4 kinases: EIF2AK1/HRI, EIF2AK2/PKR, EIF2AK3/PERK and EIF2AK4/GCN2 (By similarity). Phosphorylation at Ser-52 by the EIF2AK3/PERK protein kinase occurs in response to the unfolded protein response (By similarity). Phosphorylation on Ser-52 by the EIF2AK4/GCN2 protein kinase occurs in response to amino acid starvation and UV irradiation (By similarity). Phosphorylation at Ser-52 by EIF2AK1/HRI in response to mitochondrial damage promotes relocalization to the mitochondrial surface (By similarity).</text>
</comment>
<comment type="similarity">
    <text evidence="9">Belongs to the eIF-2-alpha family.</text>
</comment>
<comment type="caution">
    <text evidence="9">This gene should not be confused with EIF2A, with which it shares the alias EIF2A. Although both of these proteins function in binding initiator tRNA to the 40S ribosomal subunit, the eIF2 complex requires GTP, whereas the EIF2A protein does so in a codon-dependent manner.</text>
</comment>
<proteinExistence type="evidence at protein level"/>
<evidence type="ECO:0000250" key="1">
    <source>
        <dbReference type="UniProtKB" id="P05198"/>
    </source>
</evidence>
<evidence type="ECO:0000250" key="2">
    <source>
        <dbReference type="UniProtKB" id="P56286"/>
    </source>
</evidence>
<evidence type="ECO:0000250" key="3">
    <source>
        <dbReference type="UniProtKB" id="P68101"/>
    </source>
</evidence>
<evidence type="ECO:0000250" key="4">
    <source>
        <dbReference type="UniProtKB" id="P83268"/>
    </source>
</evidence>
<evidence type="ECO:0000250" key="5">
    <source>
        <dbReference type="UniProtKB" id="Q6ZWX6"/>
    </source>
</evidence>
<evidence type="ECO:0000255" key="6">
    <source>
        <dbReference type="PROSITE-ProRule" id="PRU00180"/>
    </source>
</evidence>
<evidence type="ECO:0000256" key="7">
    <source>
        <dbReference type="SAM" id="MobiDB-lite"/>
    </source>
</evidence>
<evidence type="ECO:0000269" key="8">
    <source ref="2"/>
</evidence>
<evidence type="ECO:0000305" key="9"/>
<evidence type="ECO:0000312" key="10">
    <source>
        <dbReference type="Proteomes" id="UP000314985"/>
    </source>
</evidence>
<organism>
    <name type="scientific">Sus scrofa</name>
    <name type="common">Pig</name>
    <dbReference type="NCBI Taxonomy" id="9823"/>
    <lineage>
        <taxon>Eukaryota</taxon>
        <taxon>Metazoa</taxon>
        <taxon>Chordata</taxon>
        <taxon>Craniata</taxon>
        <taxon>Vertebrata</taxon>
        <taxon>Euteleostomi</taxon>
        <taxon>Mammalia</taxon>
        <taxon>Eutheria</taxon>
        <taxon>Laurasiatheria</taxon>
        <taxon>Artiodactyla</taxon>
        <taxon>Suina</taxon>
        <taxon>Suidae</taxon>
        <taxon>Sus</taxon>
    </lineage>
</organism>
<protein>
    <recommendedName>
        <fullName>Eukaryotic translation initiation factor 2 subunit 1</fullName>
    </recommendedName>
    <alternativeName>
        <fullName>Eukaryotic translation initiation factor 2 subunit alpha</fullName>
        <shortName>eIF-2-alpha</shortName>
        <shortName>eIF-2A</shortName>
        <shortName>eIF-2alpha</shortName>
        <shortName>eIF2-alpha</shortName>
    </alternativeName>
</protein>
<sequence>MPGLSCRFYQHKFPEVEDVVMVNVRSIAEMGAYVSLLEYNNIEGMILLSELSRRRIRSINKLIRIGRNECVVVIRVDKEKGYIDLSKRRVSPEEAIKCEDKFTKSKTVYSILRHVAEVLEYTKDEQLESLFQRTAWVFDDKYKRPGYGAYDAFKHAVSDPSILDSLDLNEDEREVLINNINRRLTPQAVKIRADIEVACYGYEGIDAVKEALRAGLNCSTETMPIKINLIAPPRYVMTTTTLERTEGLSVLNQAMAVIKEKIEEKRGVFNVQMEPKVVTDTDETELARQLERLERENAEVDGDDDAEEMEAKAED</sequence>
<gene>
    <name type="primary">EIF2S1</name>
    <name type="synonym">EIF2A</name>
</gene>
<name>IF2A_PIG</name>